<feature type="chain" id="PRO_0000114028" description="Glutamyl-tRNA reductase">
    <location>
        <begin position="1"/>
        <end position="434"/>
    </location>
</feature>
<feature type="active site" description="Nucleophile" evidence="1">
    <location>
        <position position="50"/>
    </location>
</feature>
<feature type="binding site" evidence="1">
    <location>
        <begin position="49"/>
        <end position="52"/>
    </location>
    <ligand>
        <name>substrate</name>
    </ligand>
</feature>
<feature type="binding site" evidence="1">
    <location>
        <position position="109"/>
    </location>
    <ligand>
        <name>substrate</name>
    </ligand>
</feature>
<feature type="binding site" evidence="1">
    <location>
        <begin position="114"/>
        <end position="116"/>
    </location>
    <ligand>
        <name>substrate</name>
    </ligand>
</feature>
<feature type="binding site" evidence="1">
    <location>
        <position position="120"/>
    </location>
    <ligand>
        <name>substrate</name>
    </ligand>
</feature>
<feature type="binding site" evidence="1">
    <location>
        <begin position="189"/>
        <end position="194"/>
    </location>
    <ligand>
        <name>NADP(+)</name>
        <dbReference type="ChEBI" id="CHEBI:58349"/>
    </ligand>
</feature>
<feature type="site" description="Important for activity" evidence="1">
    <location>
        <position position="99"/>
    </location>
</feature>
<accession>Q747I2</accession>
<sequence length="434" mass="48487">MNIVVVGLSHKTASVEIREKIAFAPTQMEKPLRMLIAIDDIAEAVIVSTCNRVELYASTRDVAGGMARLKRFLGDYHGVPVEVLEPHLYSHHGEAAIRHVFRVAASLDSMVVGEPQILGQIKTAYGYAAEFRTSGIILNRFLHKAFSVAKRVRTETKIASSAVSVSFAAVELARKIFGDLSDKTVMLIGAGEMCELAAKHFLNNGARGVMVTNRTYERAERLAEEFEGKAIHFEDLFDQLHKADIVLSSTGATHYIIRPKDIDEVIRRRKMKPMFFIDIAVPRDIDPKVNDVENVYLYDMDDLQNVVASNLQQRAEEAKKAEGIIEEEIGQFYKWISSLEVTPTIVALRSKFEDVRRAELEKTLSAWKDLPPDGAKRLEALTAAIVNKLLHPPTATLKRTGQGGRTDLYVDALRTLFDLQTELPEPEGSLELEE</sequence>
<proteinExistence type="inferred from homology"/>
<keyword id="KW-0521">NADP</keyword>
<keyword id="KW-0560">Oxidoreductase</keyword>
<keyword id="KW-0627">Porphyrin biosynthesis</keyword>
<keyword id="KW-1185">Reference proteome</keyword>
<protein>
    <recommendedName>
        <fullName evidence="1">Glutamyl-tRNA reductase</fullName>
        <shortName evidence="1">GluTR</shortName>
        <ecNumber evidence="1">1.2.1.70</ecNumber>
    </recommendedName>
</protein>
<reference key="1">
    <citation type="journal article" date="2003" name="Science">
        <title>Genome of Geobacter sulfurreducens: metal reduction in subsurface environments.</title>
        <authorList>
            <person name="Methe B.A."/>
            <person name="Nelson K.E."/>
            <person name="Eisen J.A."/>
            <person name="Paulsen I.T."/>
            <person name="Nelson W.C."/>
            <person name="Heidelberg J.F."/>
            <person name="Wu D."/>
            <person name="Wu M."/>
            <person name="Ward N.L."/>
            <person name="Beanan M.J."/>
            <person name="Dodson R.J."/>
            <person name="Madupu R."/>
            <person name="Brinkac L.M."/>
            <person name="Daugherty S.C."/>
            <person name="DeBoy R.T."/>
            <person name="Durkin A.S."/>
            <person name="Gwinn M.L."/>
            <person name="Kolonay J.F."/>
            <person name="Sullivan S.A."/>
            <person name="Haft D.H."/>
            <person name="Selengut J."/>
            <person name="Davidsen T.M."/>
            <person name="Zafar N."/>
            <person name="White O."/>
            <person name="Tran B."/>
            <person name="Romero C."/>
            <person name="Forberger H.A."/>
            <person name="Weidman J.F."/>
            <person name="Khouri H.M."/>
            <person name="Feldblyum T.V."/>
            <person name="Utterback T.R."/>
            <person name="Van Aken S.E."/>
            <person name="Lovley D.R."/>
            <person name="Fraser C.M."/>
        </authorList>
    </citation>
    <scope>NUCLEOTIDE SEQUENCE [LARGE SCALE GENOMIC DNA]</scope>
    <source>
        <strain>ATCC 51573 / DSM 12127 / PCA</strain>
    </source>
</reference>
<dbReference type="EC" id="1.2.1.70" evidence="1"/>
<dbReference type="EMBL" id="AE017180">
    <property type="protein sequence ID" value="AAR36674.1"/>
    <property type="molecule type" value="Genomic_DNA"/>
</dbReference>
<dbReference type="RefSeq" id="NP_954324.1">
    <property type="nucleotide sequence ID" value="NC_002939.5"/>
</dbReference>
<dbReference type="RefSeq" id="WP_010943895.1">
    <property type="nucleotide sequence ID" value="NC_002939.5"/>
</dbReference>
<dbReference type="SMR" id="Q747I2"/>
<dbReference type="FunCoup" id="Q747I2">
    <property type="interactions" value="371"/>
</dbReference>
<dbReference type="STRING" id="243231.GSU3284"/>
<dbReference type="EnsemblBacteria" id="AAR36674">
    <property type="protein sequence ID" value="AAR36674"/>
    <property type="gene ID" value="GSU3284"/>
</dbReference>
<dbReference type="KEGG" id="gsu:GSU3284"/>
<dbReference type="PATRIC" id="fig|243231.5.peg.3300"/>
<dbReference type="eggNOG" id="COG0373">
    <property type="taxonomic scope" value="Bacteria"/>
</dbReference>
<dbReference type="HOGENOM" id="CLU_035113_2_2_7"/>
<dbReference type="InParanoid" id="Q747I2"/>
<dbReference type="OrthoDB" id="110209at2"/>
<dbReference type="UniPathway" id="UPA00251">
    <property type="reaction ID" value="UER00316"/>
</dbReference>
<dbReference type="Proteomes" id="UP000000577">
    <property type="component" value="Chromosome"/>
</dbReference>
<dbReference type="GO" id="GO:0008883">
    <property type="term" value="F:glutamyl-tRNA reductase activity"/>
    <property type="evidence" value="ECO:0000318"/>
    <property type="project" value="GO_Central"/>
</dbReference>
<dbReference type="GO" id="GO:0050661">
    <property type="term" value="F:NADP binding"/>
    <property type="evidence" value="ECO:0007669"/>
    <property type="project" value="InterPro"/>
</dbReference>
<dbReference type="GO" id="GO:0019353">
    <property type="term" value="P:protoporphyrinogen IX biosynthetic process from glutamate"/>
    <property type="evidence" value="ECO:0000318"/>
    <property type="project" value="GO_Central"/>
</dbReference>
<dbReference type="CDD" id="cd05213">
    <property type="entry name" value="NAD_bind_Glutamyl_tRNA_reduct"/>
    <property type="match status" value="1"/>
</dbReference>
<dbReference type="FunFam" id="3.30.460.30:FF:000001">
    <property type="entry name" value="Glutamyl-tRNA reductase"/>
    <property type="match status" value="1"/>
</dbReference>
<dbReference type="FunFam" id="3.40.50.720:FF:000031">
    <property type="entry name" value="Glutamyl-tRNA reductase"/>
    <property type="match status" value="1"/>
</dbReference>
<dbReference type="Gene3D" id="3.30.460.30">
    <property type="entry name" value="Glutamyl-tRNA reductase, N-terminal domain"/>
    <property type="match status" value="1"/>
</dbReference>
<dbReference type="Gene3D" id="3.40.50.720">
    <property type="entry name" value="NAD(P)-binding Rossmann-like Domain"/>
    <property type="match status" value="1"/>
</dbReference>
<dbReference type="HAMAP" id="MF_00087">
    <property type="entry name" value="Glu_tRNA_reductase"/>
    <property type="match status" value="1"/>
</dbReference>
<dbReference type="InterPro" id="IPR000343">
    <property type="entry name" value="4pyrrol_synth_GluRdtase"/>
</dbReference>
<dbReference type="InterPro" id="IPR015896">
    <property type="entry name" value="4pyrrol_synth_GluRdtase_dimer"/>
</dbReference>
<dbReference type="InterPro" id="IPR015895">
    <property type="entry name" value="4pyrrol_synth_GluRdtase_N"/>
</dbReference>
<dbReference type="InterPro" id="IPR018214">
    <property type="entry name" value="GluRdtase_CS"/>
</dbReference>
<dbReference type="InterPro" id="IPR036453">
    <property type="entry name" value="GluRdtase_dimer_dom_sf"/>
</dbReference>
<dbReference type="InterPro" id="IPR036343">
    <property type="entry name" value="GluRdtase_N_sf"/>
</dbReference>
<dbReference type="InterPro" id="IPR036291">
    <property type="entry name" value="NAD(P)-bd_dom_sf"/>
</dbReference>
<dbReference type="InterPro" id="IPR006151">
    <property type="entry name" value="Shikm_DH/Glu-tRNA_Rdtase"/>
</dbReference>
<dbReference type="NCBIfam" id="TIGR01035">
    <property type="entry name" value="hemA"/>
    <property type="match status" value="1"/>
</dbReference>
<dbReference type="NCBIfam" id="NF000744">
    <property type="entry name" value="PRK00045.1-3"/>
    <property type="match status" value="1"/>
</dbReference>
<dbReference type="PANTHER" id="PTHR43013">
    <property type="entry name" value="GLUTAMYL-TRNA REDUCTASE"/>
    <property type="match status" value="1"/>
</dbReference>
<dbReference type="PANTHER" id="PTHR43013:SF1">
    <property type="entry name" value="GLUTAMYL-TRNA REDUCTASE"/>
    <property type="match status" value="1"/>
</dbReference>
<dbReference type="Pfam" id="PF00745">
    <property type="entry name" value="GlutR_dimer"/>
    <property type="match status" value="1"/>
</dbReference>
<dbReference type="Pfam" id="PF05201">
    <property type="entry name" value="GlutR_N"/>
    <property type="match status" value="1"/>
</dbReference>
<dbReference type="Pfam" id="PF01488">
    <property type="entry name" value="Shikimate_DH"/>
    <property type="match status" value="1"/>
</dbReference>
<dbReference type="PIRSF" id="PIRSF000445">
    <property type="entry name" value="4pyrrol_synth_GluRdtase"/>
    <property type="match status" value="1"/>
</dbReference>
<dbReference type="SUPFAM" id="SSF69742">
    <property type="entry name" value="Glutamyl tRNA-reductase catalytic, N-terminal domain"/>
    <property type="match status" value="1"/>
</dbReference>
<dbReference type="SUPFAM" id="SSF69075">
    <property type="entry name" value="Glutamyl tRNA-reductase dimerization domain"/>
    <property type="match status" value="1"/>
</dbReference>
<dbReference type="SUPFAM" id="SSF51735">
    <property type="entry name" value="NAD(P)-binding Rossmann-fold domains"/>
    <property type="match status" value="1"/>
</dbReference>
<dbReference type="PROSITE" id="PS00747">
    <property type="entry name" value="GLUTR"/>
    <property type="match status" value="1"/>
</dbReference>
<name>HEM1_GEOSL</name>
<organism>
    <name type="scientific">Geobacter sulfurreducens (strain ATCC 51573 / DSM 12127 / PCA)</name>
    <dbReference type="NCBI Taxonomy" id="243231"/>
    <lineage>
        <taxon>Bacteria</taxon>
        <taxon>Pseudomonadati</taxon>
        <taxon>Thermodesulfobacteriota</taxon>
        <taxon>Desulfuromonadia</taxon>
        <taxon>Geobacterales</taxon>
        <taxon>Geobacteraceae</taxon>
        <taxon>Geobacter</taxon>
    </lineage>
</organism>
<evidence type="ECO:0000255" key="1">
    <source>
        <dbReference type="HAMAP-Rule" id="MF_00087"/>
    </source>
</evidence>
<comment type="function">
    <text evidence="1">Catalyzes the NADPH-dependent reduction of glutamyl-tRNA(Glu) to glutamate 1-semialdehyde (GSA).</text>
</comment>
<comment type="catalytic activity">
    <reaction evidence="1">
        <text>(S)-4-amino-5-oxopentanoate + tRNA(Glu) + NADP(+) = L-glutamyl-tRNA(Glu) + NADPH + H(+)</text>
        <dbReference type="Rhea" id="RHEA:12344"/>
        <dbReference type="Rhea" id="RHEA-COMP:9663"/>
        <dbReference type="Rhea" id="RHEA-COMP:9680"/>
        <dbReference type="ChEBI" id="CHEBI:15378"/>
        <dbReference type="ChEBI" id="CHEBI:57501"/>
        <dbReference type="ChEBI" id="CHEBI:57783"/>
        <dbReference type="ChEBI" id="CHEBI:58349"/>
        <dbReference type="ChEBI" id="CHEBI:78442"/>
        <dbReference type="ChEBI" id="CHEBI:78520"/>
        <dbReference type="EC" id="1.2.1.70"/>
    </reaction>
</comment>
<comment type="pathway">
    <text evidence="1">Porphyrin-containing compound metabolism; protoporphyrin-IX biosynthesis; 5-aminolevulinate from L-glutamyl-tRNA(Glu): step 1/2.</text>
</comment>
<comment type="subunit">
    <text evidence="1">Homodimer.</text>
</comment>
<comment type="domain">
    <text evidence="1">Possesses an unusual extended V-shaped dimeric structure with each monomer consisting of three distinct domains arranged along a curved 'spinal' alpha-helix. The N-terminal catalytic domain specifically recognizes the glutamate moiety of the substrate. The second domain is the NADPH-binding domain, and the third C-terminal domain is responsible for dimerization.</text>
</comment>
<comment type="miscellaneous">
    <text evidence="1">During catalysis, the active site Cys acts as a nucleophile attacking the alpha-carbonyl group of tRNA-bound glutamate with the formation of a thioester intermediate between enzyme and glutamate, and the concomitant release of tRNA(Glu). The thioester intermediate is finally reduced by direct hydride transfer from NADPH, to form the product GSA.</text>
</comment>
<comment type="similarity">
    <text evidence="1">Belongs to the glutamyl-tRNA reductase family.</text>
</comment>
<gene>
    <name evidence="1" type="primary">hemA</name>
    <name type="ordered locus">GSU3284</name>
</gene>